<feature type="peptide" id="PRO_0000043584" description="Temporin-1Tk" evidence="4">
    <location>
        <begin position="1"/>
        <end position="10"/>
    </location>
</feature>
<feature type="modified residue" description="Leucine amide" evidence="4">
    <location>
        <position position="10"/>
    </location>
</feature>
<reference key="1">
    <citation type="journal article" date="1996" name="Eur. J. Biochem.">
        <title>Temporins, antimicrobial peptides from the European red frog Rana temporaria.</title>
        <authorList>
            <person name="Simmaco M."/>
            <person name="Mignogna G."/>
            <person name="Canofeni S."/>
            <person name="Miele R."/>
            <person name="Mangoni M.L."/>
            <person name="Barra D."/>
        </authorList>
    </citation>
    <scope>PROTEIN SEQUENCE</scope>
    <scope>AMIDATION AT LEU-10</scope>
    <scope>SUBCELLULAR LOCATION</scope>
    <source>
        <tissue>Skin secretion</tissue>
    </source>
</reference>
<reference key="2">
    <citation type="journal article" date="2021" name="Anal. Bioanal. Chem.">
        <title>Differentiation of Central Slovenian and Moscow populations of Rana temporaria frogs using peptide biomarkers of temporins family.</title>
        <authorList>
            <person name="Samgina T.Y."/>
            <person name="Vasileva I.D."/>
            <person name="Kovalev S.V."/>
            <person name="Trebse P."/>
            <person name="Torkar G."/>
            <person name="Surin A.K."/>
            <person name="Zubarev R.A."/>
            <person name="Lebedev A.T."/>
        </authorList>
    </citation>
    <scope>PROTEIN SEQUENCE</scope>
    <scope>IDENTIFICATION BY MASS SPECTROMETRY</scope>
    <scope>SUBCELLULAR LOCATION</scope>
    <scope>AMIDATION AT LEU-10</scope>
    <source>
        <tissue evidence="5">Skin secretion</tissue>
    </source>
</reference>
<name>TPK_RANTE</name>
<evidence type="ECO:0000250" key="1">
    <source>
        <dbReference type="UniProtKB" id="P56917"/>
    </source>
</evidence>
<evidence type="ECO:0000250" key="2">
    <source>
        <dbReference type="UniProtKB" id="P79874"/>
    </source>
</evidence>
<evidence type="ECO:0000269" key="3">
    <source>
    </source>
</evidence>
<evidence type="ECO:0000269" key="4">
    <source>
    </source>
</evidence>
<evidence type="ECO:0000303" key="5">
    <source>
    </source>
</evidence>
<evidence type="ECO:0000303" key="6">
    <source>
    </source>
</evidence>
<evidence type="ECO:0000305" key="7"/>
<evidence type="ECO:0000305" key="8">
    <source>
    </source>
</evidence>
<evidence type="ECO:0000305" key="9">
    <source>
    </source>
</evidence>
<accession>P56923</accession>
<dbReference type="GO" id="GO:0005576">
    <property type="term" value="C:extracellular region"/>
    <property type="evidence" value="ECO:0000314"/>
    <property type="project" value="UniProtKB"/>
</dbReference>
<dbReference type="GO" id="GO:0042742">
    <property type="term" value="P:defense response to bacterium"/>
    <property type="evidence" value="ECO:0007669"/>
    <property type="project" value="UniProtKB-KW"/>
</dbReference>
<dbReference type="GO" id="GO:0050832">
    <property type="term" value="P:defense response to fungus"/>
    <property type="evidence" value="ECO:0007669"/>
    <property type="project" value="UniProtKB-KW"/>
</dbReference>
<dbReference type="GO" id="GO:0045087">
    <property type="term" value="P:innate immune response"/>
    <property type="evidence" value="ECO:0007669"/>
    <property type="project" value="UniProtKB-KW"/>
</dbReference>
<dbReference type="GO" id="GO:0031640">
    <property type="term" value="P:killing of cells of another organism"/>
    <property type="evidence" value="ECO:0007669"/>
    <property type="project" value="UniProtKB-KW"/>
</dbReference>
<keyword id="KW-0027">Amidation</keyword>
<keyword id="KW-0878">Amphibian defense peptide</keyword>
<keyword id="KW-0044">Antibiotic</keyword>
<keyword id="KW-0929">Antimicrobial</keyword>
<keyword id="KW-0903">Direct protein sequencing</keyword>
<keyword id="KW-0295">Fungicide</keyword>
<keyword id="KW-0391">Immunity</keyword>
<keyword id="KW-0399">Innate immunity</keyword>
<keyword id="KW-0964">Secreted</keyword>
<proteinExistence type="evidence at protein level"/>
<comment type="function">
    <text evidence="2">Amphipathic alpha-helical antimicrobial peptide with potent activity against Gram-positive bacteria, weak activity against Gram-negative bacteria, and moderate activity against fungi.</text>
</comment>
<comment type="subcellular location">
    <subcellularLocation>
        <location evidence="3 4">Secreted</location>
    </subcellularLocation>
</comment>
<comment type="tissue specificity">
    <text evidence="8 9">Expressed by the skin glands.</text>
</comment>
<comment type="mass spectrometry" mass="1121.75" method="Electrospray" evidence="3"/>
<comment type="similarity">
    <text evidence="7">Belongs to the frog skin active peptide (FSAP) family. Temporin subfamily.</text>
</comment>
<comment type="online information" name="The antimicrobial peptide database">
    <link uri="https://wangapd3.com/database/query_output.php?ID=00100"/>
</comment>
<protein>
    <recommendedName>
        <fullName evidence="1">Temporin-1Tk</fullName>
        <shortName evidence="1">TK</shortName>
    </recommendedName>
    <alternativeName>
        <fullName evidence="6">Temporin-K</fullName>
    </alternativeName>
</protein>
<organism>
    <name type="scientific">Rana temporaria</name>
    <name type="common">European common frog</name>
    <dbReference type="NCBI Taxonomy" id="8407"/>
    <lineage>
        <taxon>Eukaryota</taxon>
        <taxon>Metazoa</taxon>
        <taxon>Chordata</taxon>
        <taxon>Craniata</taxon>
        <taxon>Vertebrata</taxon>
        <taxon>Euteleostomi</taxon>
        <taxon>Amphibia</taxon>
        <taxon>Batrachia</taxon>
        <taxon>Anura</taxon>
        <taxon>Neobatrachia</taxon>
        <taxon>Ranoidea</taxon>
        <taxon>Ranidae</taxon>
        <taxon>Rana</taxon>
        <taxon>Rana</taxon>
    </lineage>
</organism>
<sequence length="10" mass="1123">LLPNLLKSLL</sequence>